<reference key="1">
    <citation type="journal article" date="1997" name="Nature">
        <title>The complete genome sequence of the hyperthermophilic, sulphate-reducing archaeon Archaeoglobus fulgidus.</title>
        <authorList>
            <person name="Klenk H.-P."/>
            <person name="Clayton R.A."/>
            <person name="Tomb J.-F."/>
            <person name="White O."/>
            <person name="Nelson K.E."/>
            <person name="Ketchum K.A."/>
            <person name="Dodson R.J."/>
            <person name="Gwinn M.L."/>
            <person name="Hickey E.K."/>
            <person name="Peterson J.D."/>
            <person name="Richardson D.L."/>
            <person name="Kerlavage A.R."/>
            <person name="Graham D.E."/>
            <person name="Kyrpides N.C."/>
            <person name="Fleischmann R.D."/>
            <person name="Quackenbush J."/>
            <person name="Lee N.H."/>
            <person name="Sutton G.G."/>
            <person name="Gill S.R."/>
            <person name="Kirkness E.F."/>
            <person name="Dougherty B.A."/>
            <person name="McKenney K."/>
            <person name="Adams M.D."/>
            <person name="Loftus B.J."/>
            <person name="Peterson S.N."/>
            <person name="Reich C.I."/>
            <person name="McNeil L.K."/>
            <person name="Badger J.H."/>
            <person name="Glodek A."/>
            <person name="Zhou L."/>
            <person name="Overbeek R."/>
            <person name="Gocayne J.D."/>
            <person name="Weidman J.F."/>
            <person name="McDonald L.A."/>
            <person name="Utterback T.R."/>
            <person name="Cotton M.D."/>
            <person name="Spriggs T."/>
            <person name="Artiach P."/>
            <person name="Kaine B.P."/>
            <person name="Sykes S.M."/>
            <person name="Sadow P.W."/>
            <person name="D'Andrea K.P."/>
            <person name="Bowman C."/>
            <person name="Fujii C."/>
            <person name="Garland S.A."/>
            <person name="Mason T.M."/>
            <person name="Olsen G.J."/>
            <person name="Fraser C.M."/>
            <person name="Smith H.O."/>
            <person name="Woese C.R."/>
            <person name="Venter J.C."/>
        </authorList>
    </citation>
    <scope>NUCLEOTIDE SEQUENCE [LARGE SCALE GENOMIC DNA]</scope>
    <source>
        <strain>ATCC 49558 / DSM 4304 / JCM 9628 / NBRC 100126 / VC-16</strain>
    </source>
</reference>
<name>THSA_ARCFU</name>
<keyword id="KW-0067">ATP-binding</keyword>
<keyword id="KW-0143">Chaperone</keyword>
<keyword id="KW-0547">Nucleotide-binding</keyword>
<keyword id="KW-1185">Reference proteome</keyword>
<proteinExistence type="inferred from homology"/>
<evidence type="ECO:0000250" key="1"/>
<evidence type="ECO:0000305" key="2"/>
<gene>
    <name type="primary">thsA</name>
    <name type="ordered locus">AF_2238</name>
</gene>
<sequence length="545" mass="58978">MATLQGTPVLILKEGTQRTVGRDAQRMNIMAARVIAEAVKSTLGPKGMDKMLVDSLGDVVITNDGVTILKEMDVEHPAAKMIIEVAKTQDNEVGDGTTTAVVLAGELLKKAEELLDQDIHPTVIARGYRMAANKAVEILESIAMDIDVEDEETLKKIAATAITGKHSEYALDHLSSLVVEAVKRVAEKVDDRYKVDEDNIKLEKRQGGSVADTKLVNGIVIDKEVVHPGMPKRVKNAKIAVLKAALEVKETETDAEIRITDPDQLMKFIEQEEKMLKEMVDRLAEAGANVVFCQKGIDDLAQYYLAKAGILAVRRVKQSDIEKIAKACGAKIITDLREITSADLGEAELVEERKVGDEKMVFIEGCKNPKAVTILIRGGSEHVVDEVERSLQDAIKVVKTALESGKVVAGGGAPEIEVALKIRDWAPTLGGREQLAAEAFASALEVIPRALAENSGLDPIDILVELRKAHEEGKTTYGVDVFSGEVACMKERGVLEPLKVKTQAITSATEVAIMILRIDDVIAAKGLEKEKGPEGESGGEEDSEE</sequence>
<feature type="chain" id="PRO_0000128381" description="Thermosome subunit alpha">
    <location>
        <begin position="1"/>
        <end position="545"/>
    </location>
</feature>
<accession>O28045</accession>
<dbReference type="EMBL" id="AE000782">
    <property type="protein sequence ID" value="AAB89014.1"/>
    <property type="molecule type" value="Genomic_DNA"/>
</dbReference>
<dbReference type="EMBL" id="AF035826">
    <property type="protein sequence ID" value="AAB88860.1"/>
    <property type="molecule type" value="Genomic_DNA"/>
</dbReference>
<dbReference type="PIR" id="F69529">
    <property type="entry name" value="F69529"/>
</dbReference>
<dbReference type="SMR" id="O28045"/>
<dbReference type="STRING" id="224325.AF_2238"/>
<dbReference type="PaxDb" id="224325-AF_2238"/>
<dbReference type="EnsemblBacteria" id="AAB89014">
    <property type="protein sequence ID" value="AAB89014"/>
    <property type="gene ID" value="AF_2238"/>
</dbReference>
<dbReference type="KEGG" id="afu:AF_2238"/>
<dbReference type="eggNOG" id="arCOG01257">
    <property type="taxonomic scope" value="Archaea"/>
</dbReference>
<dbReference type="HOGENOM" id="CLU_008891_7_3_2"/>
<dbReference type="OrthoDB" id="9362at2157"/>
<dbReference type="PhylomeDB" id="O28045"/>
<dbReference type="Proteomes" id="UP000002199">
    <property type="component" value="Chromosome"/>
</dbReference>
<dbReference type="GO" id="GO:0005524">
    <property type="term" value="F:ATP binding"/>
    <property type="evidence" value="ECO:0007669"/>
    <property type="project" value="UniProtKB-KW"/>
</dbReference>
<dbReference type="GO" id="GO:0016887">
    <property type="term" value="F:ATP hydrolysis activity"/>
    <property type="evidence" value="ECO:0007669"/>
    <property type="project" value="InterPro"/>
</dbReference>
<dbReference type="GO" id="GO:0140662">
    <property type="term" value="F:ATP-dependent protein folding chaperone"/>
    <property type="evidence" value="ECO:0007669"/>
    <property type="project" value="InterPro"/>
</dbReference>
<dbReference type="GO" id="GO:0051082">
    <property type="term" value="F:unfolded protein binding"/>
    <property type="evidence" value="ECO:0007669"/>
    <property type="project" value="InterPro"/>
</dbReference>
<dbReference type="CDD" id="cd03343">
    <property type="entry name" value="cpn60"/>
    <property type="match status" value="1"/>
</dbReference>
<dbReference type="FunFam" id="1.10.560.10:FF:000017">
    <property type="entry name" value="T-complex protein 1 subunit eta"/>
    <property type="match status" value="1"/>
</dbReference>
<dbReference type="Gene3D" id="3.50.7.10">
    <property type="entry name" value="GroEL"/>
    <property type="match status" value="1"/>
</dbReference>
<dbReference type="Gene3D" id="1.10.560.10">
    <property type="entry name" value="GroEL-like equatorial domain"/>
    <property type="match status" value="1"/>
</dbReference>
<dbReference type="Gene3D" id="3.30.260.10">
    <property type="entry name" value="TCP-1-like chaperonin intermediate domain"/>
    <property type="match status" value="1"/>
</dbReference>
<dbReference type="InterPro" id="IPR017998">
    <property type="entry name" value="Chaperone_TCP-1"/>
</dbReference>
<dbReference type="InterPro" id="IPR002194">
    <property type="entry name" value="Chaperonin_TCP-1_CS"/>
</dbReference>
<dbReference type="InterPro" id="IPR002423">
    <property type="entry name" value="Cpn60/GroEL/TCP-1"/>
</dbReference>
<dbReference type="InterPro" id="IPR027409">
    <property type="entry name" value="GroEL-like_apical_dom_sf"/>
</dbReference>
<dbReference type="InterPro" id="IPR027413">
    <property type="entry name" value="GROEL-like_equatorial_sf"/>
</dbReference>
<dbReference type="InterPro" id="IPR027410">
    <property type="entry name" value="TCP-1-like_intermed_sf"/>
</dbReference>
<dbReference type="InterPro" id="IPR053374">
    <property type="entry name" value="TCP-1_chaperonin"/>
</dbReference>
<dbReference type="InterPro" id="IPR054827">
    <property type="entry name" value="thermosome_alpha"/>
</dbReference>
<dbReference type="InterPro" id="IPR012714">
    <property type="entry name" value="Thermosome_arc"/>
</dbReference>
<dbReference type="NCBIfam" id="NF041082">
    <property type="entry name" value="thermosome_alpha"/>
    <property type="match status" value="1"/>
</dbReference>
<dbReference type="NCBIfam" id="TIGR02339">
    <property type="entry name" value="thermosome_arch"/>
    <property type="match status" value="1"/>
</dbReference>
<dbReference type="NCBIfam" id="NF041083">
    <property type="entry name" value="thermosome_beta"/>
    <property type="match status" value="1"/>
</dbReference>
<dbReference type="PANTHER" id="PTHR11353">
    <property type="entry name" value="CHAPERONIN"/>
    <property type="match status" value="1"/>
</dbReference>
<dbReference type="Pfam" id="PF00118">
    <property type="entry name" value="Cpn60_TCP1"/>
    <property type="match status" value="1"/>
</dbReference>
<dbReference type="PRINTS" id="PR00304">
    <property type="entry name" value="TCOMPLEXTCP1"/>
</dbReference>
<dbReference type="SUPFAM" id="SSF52029">
    <property type="entry name" value="GroEL apical domain-like"/>
    <property type="match status" value="1"/>
</dbReference>
<dbReference type="SUPFAM" id="SSF48592">
    <property type="entry name" value="GroEL equatorial domain-like"/>
    <property type="match status" value="1"/>
</dbReference>
<dbReference type="SUPFAM" id="SSF54849">
    <property type="entry name" value="GroEL-intermediate domain like"/>
    <property type="match status" value="1"/>
</dbReference>
<dbReference type="PROSITE" id="PS00750">
    <property type="entry name" value="TCP1_1"/>
    <property type="match status" value="1"/>
</dbReference>
<dbReference type="PROSITE" id="PS00751">
    <property type="entry name" value="TCP1_2"/>
    <property type="match status" value="1"/>
</dbReference>
<dbReference type="PROSITE" id="PS00995">
    <property type="entry name" value="TCP1_3"/>
    <property type="match status" value="1"/>
</dbReference>
<protein>
    <recommendedName>
        <fullName>Thermosome subunit alpha</fullName>
    </recommendedName>
    <alternativeName>
        <fullName>Chaperonin subunit alpha</fullName>
    </alternativeName>
    <alternativeName>
        <fullName>Thermosome subunit 1</fullName>
    </alternativeName>
</protein>
<organism>
    <name type="scientific">Archaeoglobus fulgidus (strain ATCC 49558 / DSM 4304 / JCM 9628 / NBRC 100126 / VC-16)</name>
    <dbReference type="NCBI Taxonomy" id="224325"/>
    <lineage>
        <taxon>Archaea</taxon>
        <taxon>Methanobacteriati</taxon>
        <taxon>Methanobacteriota</taxon>
        <taxon>Archaeoglobi</taxon>
        <taxon>Archaeoglobales</taxon>
        <taxon>Archaeoglobaceae</taxon>
        <taxon>Archaeoglobus</taxon>
    </lineage>
</organism>
<comment type="function">
    <text evidence="1">Molecular chaperone; binds unfolded polypeptides in vitro, and has a weak ATPase activity.</text>
</comment>
<comment type="subunit">
    <text evidence="1">Forms a Heterooligomeric complex of two stacked eight-membered rings.</text>
</comment>
<comment type="similarity">
    <text evidence="2">Belongs to the TCP-1 chaperonin family.</text>
</comment>